<dbReference type="EC" id="2.7.7.27" evidence="1"/>
<dbReference type="EMBL" id="CP000305">
    <property type="protein sequence ID" value="ABG19915.1"/>
    <property type="molecule type" value="Genomic_DNA"/>
</dbReference>
<dbReference type="EMBL" id="ACNQ01000019">
    <property type="protein sequence ID" value="EEO74480.1"/>
    <property type="molecule type" value="Genomic_DNA"/>
</dbReference>
<dbReference type="SMR" id="Q1CDL5"/>
<dbReference type="KEGG" id="ypn:YPN_3588"/>
<dbReference type="HOGENOM" id="CLU_029499_14_1_6"/>
<dbReference type="UniPathway" id="UPA00164"/>
<dbReference type="Proteomes" id="UP000008936">
    <property type="component" value="Chromosome"/>
</dbReference>
<dbReference type="GO" id="GO:0005524">
    <property type="term" value="F:ATP binding"/>
    <property type="evidence" value="ECO:0007669"/>
    <property type="project" value="UniProtKB-KW"/>
</dbReference>
<dbReference type="GO" id="GO:0008878">
    <property type="term" value="F:glucose-1-phosphate adenylyltransferase activity"/>
    <property type="evidence" value="ECO:0007669"/>
    <property type="project" value="UniProtKB-UniRule"/>
</dbReference>
<dbReference type="GO" id="GO:0005978">
    <property type="term" value="P:glycogen biosynthetic process"/>
    <property type="evidence" value="ECO:0007669"/>
    <property type="project" value="UniProtKB-UniRule"/>
</dbReference>
<dbReference type="CDD" id="cd02508">
    <property type="entry name" value="ADP_Glucose_PP"/>
    <property type="match status" value="1"/>
</dbReference>
<dbReference type="CDD" id="cd04651">
    <property type="entry name" value="LbH_G1P_AT_C"/>
    <property type="match status" value="1"/>
</dbReference>
<dbReference type="FunFam" id="3.90.550.10:FF:000014">
    <property type="entry name" value="Glucose-1-phosphate adenylyltransferase"/>
    <property type="match status" value="1"/>
</dbReference>
<dbReference type="Gene3D" id="2.160.10.10">
    <property type="entry name" value="Hexapeptide repeat proteins"/>
    <property type="match status" value="1"/>
</dbReference>
<dbReference type="Gene3D" id="3.90.550.10">
    <property type="entry name" value="Spore Coat Polysaccharide Biosynthesis Protein SpsA, Chain A"/>
    <property type="match status" value="1"/>
</dbReference>
<dbReference type="HAMAP" id="MF_00624">
    <property type="entry name" value="GlgC"/>
    <property type="match status" value="1"/>
</dbReference>
<dbReference type="InterPro" id="IPR011831">
    <property type="entry name" value="ADP-Glc_PPase"/>
</dbReference>
<dbReference type="InterPro" id="IPR005836">
    <property type="entry name" value="ADP_Glu_pyroP_CS"/>
</dbReference>
<dbReference type="InterPro" id="IPR023049">
    <property type="entry name" value="GlgC_bac"/>
</dbReference>
<dbReference type="InterPro" id="IPR056818">
    <property type="entry name" value="GlmU/GlgC-like_hexapep"/>
</dbReference>
<dbReference type="InterPro" id="IPR005835">
    <property type="entry name" value="NTP_transferase_dom"/>
</dbReference>
<dbReference type="InterPro" id="IPR029044">
    <property type="entry name" value="Nucleotide-diphossugar_trans"/>
</dbReference>
<dbReference type="InterPro" id="IPR011004">
    <property type="entry name" value="Trimer_LpxA-like_sf"/>
</dbReference>
<dbReference type="NCBIfam" id="TIGR02091">
    <property type="entry name" value="glgC"/>
    <property type="match status" value="1"/>
</dbReference>
<dbReference type="NCBIfam" id="NF001947">
    <property type="entry name" value="PRK00725.1"/>
    <property type="match status" value="1"/>
</dbReference>
<dbReference type="NCBIfam" id="NF002023">
    <property type="entry name" value="PRK00844.1"/>
    <property type="match status" value="1"/>
</dbReference>
<dbReference type="PANTHER" id="PTHR43523:SF2">
    <property type="entry name" value="GLUCOSE-1-PHOSPHATE ADENYLYLTRANSFERASE"/>
    <property type="match status" value="1"/>
</dbReference>
<dbReference type="PANTHER" id="PTHR43523">
    <property type="entry name" value="GLUCOSE-1-PHOSPHATE ADENYLYLTRANSFERASE-RELATED"/>
    <property type="match status" value="1"/>
</dbReference>
<dbReference type="Pfam" id="PF24894">
    <property type="entry name" value="Hexapep_GlmU"/>
    <property type="match status" value="1"/>
</dbReference>
<dbReference type="Pfam" id="PF00483">
    <property type="entry name" value="NTP_transferase"/>
    <property type="match status" value="1"/>
</dbReference>
<dbReference type="SUPFAM" id="SSF53448">
    <property type="entry name" value="Nucleotide-diphospho-sugar transferases"/>
    <property type="match status" value="1"/>
</dbReference>
<dbReference type="SUPFAM" id="SSF51161">
    <property type="entry name" value="Trimeric LpxA-like enzymes"/>
    <property type="match status" value="1"/>
</dbReference>
<dbReference type="PROSITE" id="PS00808">
    <property type="entry name" value="ADP_GLC_PYROPHOSPH_1"/>
    <property type="match status" value="1"/>
</dbReference>
<dbReference type="PROSITE" id="PS00809">
    <property type="entry name" value="ADP_GLC_PYROPHOSPH_2"/>
    <property type="match status" value="1"/>
</dbReference>
<dbReference type="PROSITE" id="PS00810">
    <property type="entry name" value="ADP_GLC_PYROPHOSPH_3"/>
    <property type="match status" value="1"/>
</dbReference>
<name>GLGC_YERPN</name>
<feature type="chain" id="PRO_0000261908" description="Glucose-1-phosphate adenylyltransferase">
    <location>
        <begin position="1"/>
        <end position="476"/>
    </location>
</feature>
<feature type="binding site" evidence="1">
    <location>
        <position position="114"/>
    </location>
    <ligand>
        <name>alpha-D-glucose 1-phosphate</name>
        <dbReference type="ChEBI" id="CHEBI:58601"/>
    </ligand>
</feature>
<feature type="binding site" evidence="1">
    <location>
        <position position="179"/>
    </location>
    <ligand>
        <name>alpha-D-glucose 1-phosphate</name>
        <dbReference type="ChEBI" id="CHEBI:58601"/>
    </ligand>
</feature>
<feature type="binding site" evidence="1">
    <location>
        <begin position="194"/>
        <end position="195"/>
    </location>
    <ligand>
        <name>alpha-D-glucose 1-phosphate</name>
        <dbReference type="ChEBI" id="CHEBI:58601"/>
    </ligand>
</feature>
<feature type="binding site" evidence="1">
    <location>
        <position position="212"/>
    </location>
    <ligand>
        <name>alpha-D-glucose 1-phosphate</name>
        <dbReference type="ChEBI" id="CHEBI:58601"/>
    </ligand>
</feature>
<keyword id="KW-0067">ATP-binding</keyword>
<keyword id="KW-0119">Carbohydrate metabolism</keyword>
<keyword id="KW-0320">Glycogen biosynthesis</keyword>
<keyword id="KW-0321">Glycogen metabolism</keyword>
<keyword id="KW-0547">Nucleotide-binding</keyword>
<keyword id="KW-0548">Nucleotidyltransferase</keyword>
<keyword id="KW-0808">Transferase</keyword>
<evidence type="ECO:0000255" key="1">
    <source>
        <dbReference type="HAMAP-Rule" id="MF_00624"/>
    </source>
</evidence>
<accession>Q1CDL5</accession>
<accession>D1Q1S7</accession>
<reference key="1">
    <citation type="journal article" date="2006" name="J. Bacteriol.">
        <title>Complete genome sequence of Yersinia pestis strains Antiqua and Nepal516: evidence of gene reduction in an emerging pathogen.</title>
        <authorList>
            <person name="Chain P.S.G."/>
            <person name="Hu P."/>
            <person name="Malfatti S.A."/>
            <person name="Radnedge L."/>
            <person name="Larimer F."/>
            <person name="Vergez L.M."/>
            <person name="Worsham P."/>
            <person name="Chu M.C."/>
            <person name="Andersen G.L."/>
        </authorList>
    </citation>
    <scope>NUCLEOTIDE SEQUENCE [LARGE SCALE GENOMIC DNA]</scope>
    <source>
        <strain>Nepal516</strain>
    </source>
</reference>
<reference key="2">
    <citation type="submission" date="2009-04" db="EMBL/GenBank/DDBJ databases">
        <title>Yersinia pestis Nepal516A whole genome shotgun sequencing project.</title>
        <authorList>
            <person name="Plunkett G. III"/>
            <person name="Anderson B.D."/>
            <person name="Baumler D.J."/>
            <person name="Burland V."/>
            <person name="Cabot E.L."/>
            <person name="Glasner J.D."/>
            <person name="Mau B."/>
            <person name="Neeno-Eckwall E."/>
            <person name="Perna N.T."/>
            <person name="Munk A.C."/>
            <person name="Tapia R."/>
            <person name="Green L.D."/>
            <person name="Rogers Y.C."/>
            <person name="Detter J.C."/>
            <person name="Bruce D.C."/>
            <person name="Brettin T.S."/>
        </authorList>
    </citation>
    <scope>NUCLEOTIDE SEQUENCE [LARGE SCALE GENOMIC DNA]</scope>
    <source>
        <strain>Nepal516</strain>
    </source>
</reference>
<comment type="function">
    <text evidence="1">Involved in the biosynthesis of ADP-glucose, a building block required for the elongation reactions to produce glycogen. Catalyzes the reaction between ATP and alpha-D-glucose 1-phosphate (G1P) to produce pyrophosphate and ADP-Glc.</text>
</comment>
<comment type="catalytic activity">
    <reaction evidence="1">
        <text>alpha-D-glucose 1-phosphate + ATP + H(+) = ADP-alpha-D-glucose + diphosphate</text>
        <dbReference type="Rhea" id="RHEA:12120"/>
        <dbReference type="ChEBI" id="CHEBI:15378"/>
        <dbReference type="ChEBI" id="CHEBI:30616"/>
        <dbReference type="ChEBI" id="CHEBI:33019"/>
        <dbReference type="ChEBI" id="CHEBI:57498"/>
        <dbReference type="ChEBI" id="CHEBI:58601"/>
        <dbReference type="EC" id="2.7.7.27"/>
    </reaction>
</comment>
<comment type="pathway">
    <text evidence="1">Glycan biosynthesis; glycogen biosynthesis.</text>
</comment>
<comment type="subunit">
    <text evidence="1">Homotetramer.</text>
</comment>
<comment type="similarity">
    <text evidence="1">Belongs to the bacterial/plant glucose-1-phosphate adenylyltransferase family.</text>
</comment>
<sequence length="476" mass="53114">MVRFESTDSLMLARQLPNKTVALILAGGRGSRLKDLTATRAKPAVHFGGKFRIIDFALSNCLNSGVRRIGVITQYQSHTLVQHIQRGWSFLNEEMNEFVDLLPAQQRLSTEQWYKGTADAVCQNLDIIRRYDAEYIVILAGDHIYKMDYSRMLLDHVEKGAECTVACIPVPISEGSEFGIMEVTADYQITAFYEKPANPPPIPGDPSNALASMGIYIFNADYLFKLLEEDNNTPGSSHDFGKDIIPQLTARKVVWAHPFDLSCVTSNAELPPYWRDVGTLDAYWRANLDLASVTPELDMYDRAWPIRTHMEPLPPAKFVQDRSGSHGMTMNSLVSGGCIVSGSVVVHSVLFPRVRVNSFCTIDSSLLLPDVHVGRSCRLRRCIIDRACHIPEGMVIGENADEDSARFYRSEGGGGVSDSGYAGKVRGKIEPLGFLFVRLDLLIRLSLLIRLNLFIRMNLLIILTLFFKLASIQASH</sequence>
<proteinExistence type="inferred from homology"/>
<gene>
    <name evidence="1" type="primary">glgC</name>
    <name type="ordered locus">YPN_3588</name>
    <name type="ORF">YP516_4077</name>
</gene>
<organism>
    <name type="scientific">Yersinia pestis bv. Antiqua (strain Nepal516)</name>
    <dbReference type="NCBI Taxonomy" id="377628"/>
    <lineage>
        <taxon>Bacteria</taxon>
        <taxon>Pseudomonadati</taxon>
        <taxon>Pseudomonadota</taxon>
        <taxon>Gammaproteobacteria</taxon>
        <taxon>Enterobacterales</taxon>
        <taxon>Yersiniaceae</taxon>
        <taxon>Yersinia</taxon>
    </lineage>
</organism>
<protein>
    <recommendedName>
        <fullName evidence="1">Glucose-1-phosphate adenylyltransferase</fullName>
        <ecNumber evidence="1">2.7.7.27</ecNumber>
    </recommendedName>
    <alternativeName>
        <fullName evidence="1">ADP-glucose pyrophosphorylase</fullName>
        <shortName evidence="1">ADPGlc PPase</shortName>
    </alternativeName>
    <alternativeName>
        <fullName evidence="1">ADP-glucose synthase</fullName>
    </alternativeName>
</protein>